<keyword id="KW-0067">ATP-binding</keyword>
<keyword id="KW-1003">Cell membrane</keyword>
<keyword id="KW-0966">Cell projection</keyword>
<keyword id="KW-0217">Developmental protein</keyword>
<keyword id="KW-0418">Kinase</keyword>
<keyword id="KW-0472">Membrane</keyword>
<keyword id="KW-0524">Neurogenesis</keyword>
<keyword id="KW-0547">Nucleotide-binding</keyword>
<keyword id="KW-0597">Phosphoprotein</keyword>
<keyword id="KW-0675">Receptor</keyword>
<keyword id="KW-1185">Reference proteome</keyword>
<keyword id="KW-0808">Transferase</keyword>
<keyword id="KW-0812">Transmembrane</keyword>
<keyword id="KW-1133">Transmembrane helix</keyword>
<keyword id="KW-0829">Tyrosine-protein kinase</keyword>
<name>EPHB3_DANRE</name>
<reference key="1">
    <citation type="journal article" date="1997" name="Dev. Dyn.">
        <title>Novel Eph-family receptor tyrosine kinase is widely expressed in the developing zebrafish nervous system.</title>
        <authorList>
            <person name="Bovenkamp D.E."/>
            <person name="Greer P."/>
        </authorList>
    </citation>
    <scope>NUCLEOTIDE SEQUENCE [MRNA]</scope>
</reference>
<organism>
    <name type="scientific">Danio rerio</name>
    <name type="common">Zebrafish</name>
    <name type="synonym">Brachydanio rerio</name>
    <dbReference type="NCBI Taxonomy" id="7955"/>
    <lineage>
        <taxon>Eukaryota</taxon>
        <taxon>Metazoa</taxon>
        <taxon>Chordata</taxon>
        <taxon>Craniata</taxon>
        <taxon>Vertebrata</taxon>
        <taxon>Euteleostomi</taxon>
        <taxon>Actinopterygii</taxon>
        <taxon>Neopterygii</taxon>
        <taxon>Teleostei</taxon>
        <taxon>Ostariophysi</taxon>
        <taxon>Cypriniformes</taxon>
        <taxon>Danionidae</taxon>
        <taxon>Danioninae</taxon>
        <taxon>Danio</taxon>
    </lineage>
</organism>
<protein>
    <recommendedName>
        <fullName>Ephrin type-B receptor 3</fullName>
        <ecNumber>2.7.10.1</ecNumber>
    </recommendedName>
    <alternativeName>
        <fullName>EPH-like kinase 3</fullName>
    </alternativeName>
    <alternativeName>
        <fullName>Tyrosine-protein kinase receptor ZEK3</fullName>
    </alternativeName>
</protein>
<sequence>PLLVLDLIIQERGESFSHTVTAQHTSAKVEGLKAGTVYSVQVRARTVAGYGRYSNPVDFSTSLYVCPVSSSSTSMHLRRREELTTTTTGLKSREERFQKSDDPERSVQDLLPLIVGSASAGFVVILAMIVIAVVCLRRQRTGSELEYTEKLQQYVSPGVKVYIDPFTYEDPNEAVHEFAREIDISCVKIEEVIGAGEFGEVCRGRLKQAGRKETTVAIKTLKAGYTEHQRRDFLSEASIMGQFDHPNVIHLEGVLTRSCPVLIVTEFMENGALDSFLRLNDGRFTVTQLVGMLRGIAAGMKYLSDMNYVHRDLAARNVLVNSNLVCKVSDFGLSRFLDDNSSDPTYTSSLGGKIPIRWTAPEAIAFRKFTSASDVWSYGIVMWEVMSFGERPYWDMSNQDVMNAVEQDYRLPPPMDCPAVLHQLMLECWVKERNMRPRFGQIVSTLDKFLRNAASLKVLTSTHSGDLCRIGGTLPGHQRKSIGDAQDIKQQMSQTLPIRV</sequence>
<comment type="function">
    <text evidence="1">Receptor tyrosine kinase which binds promiscuously transmembrane ephrin-B family ligands residing on adjacent cells, leading to contact-dependent bidirectional signaling into neighboring cells. The signaling pathway downstream of the receptor is referred to as forward signaling while the signaling pathway downstream of the ephrin ligand is referred to as reverse signaling. Generally has an overlapping and redundant function with EPHB2. Like EPHB2, functions in axon guidance during development. In addition to its role in axon guidance also plays an important redundant role with other ephrin-B receptors in development and maturation of dendritic spines and the formation of excitatory synapses. May control other aspects of development through regulation of cell migration and positioning (By similarity). May play a role in early pattern formation within the developing nervous system.</text>
</comment>
<comment type="catalytic activity">
    <reaction evidence="6">
        <text>L-tyrosyl-[protein] + ATP = O-phospho-L-tyrosyl-[protein] + ADP + H(+)</text>
        <dbReference type="Rhea" id="RHEA:10596"/>
        <dbReference type="Rhea" id="RHEA-COMP:10136"/>
        <dbReference type="Rhea" id="RHEA-COMP:20101"/>
        <dbReference type="ChEBI" id="CHEBI:15378"/>
        <dbReference type="ChEBI" id="CHEBI:30616"/>
        <dbReference type="ChEBI" id="CHEBI:46858"/>
        <dbReference type="ChEBI" id="CHEBI:61978"/>
        <dbReference type="ChEBI" id="CHEBI:456216"/>
        <dbReference type="EC" id="2.7.10.1"/>
    </reaction>
</comment>
<comment type="subunit">
    <text evidence="1">Heterotetramer upon binding of the ligand. The heterotetramer is composed of an ephrin dimer and a receptor dimer. Oligomerization is probably required to induce biological responses (By similarity).</text>
</comment>
<comment type="subcellular location">
    <subcellularLocation>
        <location evidence="1">Cell membrane</location>
        <topology evidence="1">Single-pass type I membrane protein</topology>
    </subcellularLocation>
    <subcellularLocation>
        <location evidence="1">Cell projection</location>
        <location evidence="1">Dendrite</location>
    </subcellularLocation>
</comment>
<comment type="tissue specificity">
    <text>Widely expressed in the developing nervous system.</text>
</comment>
<comment type="PTM">
    <text evidence="1">Phosphorylated. Autophosphorylates upon ligand-binding. Autophosphorylation on Tyr-168 is required for interaction with SH2 domain-containing proteins (By similarity).</text>
</comment>
<comment type="similarity">
    <text evidence="3">Belongs to the protein kinase superfamily. Tyr protein kinase family. Ephrin receptor subfamily.</text>
</comment>
<feature type="chain" id="PRO_0000160277" description="Ephrin type-B receptor 3">
    <location>
        <begin position="1" status="less than"/>
        <end position="500"/>
    </location>
</feature>
<feature type="topological domain" description="Extracellular" evidence="2">
    <location>
        <begin position="1" status="less than"/>
        <end position="113"/>
    </location>
</feature>
<feature type="transmembrane region" description="Helical" evidence="2">
    <location>
        <begin position="114"/>
        <end position="134"/>
    </location>
</feature>
<feature type="topological domain" description="Cytoplasmic" evidence="2">
    <location>
        <begin position="135"/>
        <end position="500"/>
    </location>
</feature>
<feature type="domain" description="Fibronectin type-III" evidence="5">
    <location>
        <begin position="1" status="less than"/>
        <end position="64"/>
    </location>
</feature>
<feature type="domain" description="Protein kinase" evidence="3">
    <location>
        <begin position="187"/>
        <end position="450"/>
    </location>
</feature>
<feature type="domain" description="SAM" evidence="4">
    <location>
        <begin position="421"/>
        <end position="500"/>
    </location>
</feature>
<feature type="region of interest" description="Disordered" evidence="7">
    <location>
        <begin position="76"/>
        <end position="103"/>
    </location>
</feature>
<feature type="short sequence motif" description="PDZ-binding" evidence="2">
    <location>
        <begin position="498"/>
        <end position="500"/>
    </location>
</feature>
<feature type="compositionally biased region" description="Basic and acidic residues" evidence="7">
    <location>
        <begin position="91"/>
        <end position="103"/>
    </location>
</feature>
<feature type="active site" description="Proton acceptor" evidence="3 6">
    <location>
        <position position="312"/>
    </location>
</feature>
<feature type="binding site" evidence="3">
    <location>
        <begin position="193"/>
        <end position="201"/>
    </location>
    <ligand>
        <name>ATP</name>
        <dbReference type="ChEBI" id="CHEBI:30616"/>
    </ligand>
</feature>
<feature type="binding site" evidence="3">
    <location>
        <position position="219"/>
    </location>
    <ligand>
        <name>ATP</name>
        <dbReference type="ChEBI" id="CHEBI:30616"/>
    </ligand>
</feature>
<feature type="modified residue" description="Phosphotyrosine; by autocatalysis" evidence="1">
    <location>
        <position position="168"/>
    </location>
</feature>
<feature type="non-terminal residue">
    <location>
        <position position="1"/>
    </location>
</feature>
<accession>O13147</accession>
<dbReference type="EC" id="2.7.10.1"/>
<dbReference type="EMBL" id="U89379">
    <property type="protein sequence ID" value="AAC60221.1"/>
    <property type="molecule type" value="mRNA"/>
</dbReference>
<dbReference type="SMR" id="O13147"/>
<dbReference type="STRING" id="7955.ENSDARP00000040208"/>
<dbReference type="PaxDb" id="7955-ENSDARP00000040208"/>
<dbReference type="AGR" id="ZFIN:ZDB-GENE-990415-60"/>
<dbReference type="ZFIN" id="ZDB-GENE-990415-60">
    <property type="gene designation" value="ephb3a"/>
</dbReference>
<dbReference type="eggNOG" id="KOG0196">
    <property type="taxonomic scope" value="Eukaryota"/>
</dbReference>
<dbReference type="InParanoid" id="O13147"/>
<dbReference type="Proteomes" id="UP000000437">
    <property type="component" value="Unplaced"/>
</dbReference>
<dbReference type="GO" id="GO:0030425">
    <property type="term" value="C:dendrite"/>
    <property type="evidence" value="ECO:0007669"/>
    <property type="project" value="UniProtKB-SubCell"/>
</dbReference>
<dbReference type="GO" id="GO:0005886">
    <property type="term" value="C:plasma membrane"/>
    <property type="evidence" value="ECO:0000250"/>
    <property type="project" value="UniProtKB"/>
</dbReference>
<dbReference type="GO" id="GO:0043235">
    <property type="term" value="C:receptor complex"/>
    <property type="evidence" value="ECO:0000318"/>
    <property type="project" value="GO_Central"/>
</dbReference>
<dbReference type="GO" id="GO:0005524">
    <property type="term" value="F:ATP binding"/>
    <property type="evidence" value="ECO:0007669"/>
    <property type="project" value="UniProtKB-KW"/>
</dbReference>
<dbReference type="GO" id="GO:0005003">
    <property type="term" value="F:ephrin receptor activity"/>
    <property type="evidence" value="ECO:0000250"/>
    <property type="project" value="UniProtKB"/>
</dbReference>
<dbReference type="GO" id="GO:0004714">
    <property type="term" value="F:transmembrane receptor protein tyrosine kinase activity"/>
    <property type="evidence" value="ECO:0000318"/>
    <property type="project" value="GO_Central"/>
</dbReference>
<dbReference type="GO" id="GO:0007411">
    <property type="term" value="P:axon guidance"/>
    <property type="evidence" value="ECO:0000250"/>
    <property type="project" value="UniProtKB"/>
</dbReference>
<dbReference type="GO" id="GO:0007413">
    <property type="term" value="P:axonal fasciculation"/>
    <property type="evidence" value="ECO:0000250"/>
    <property type="project" value="UniProtKB"/>
</dbReference>
<dbReference type="GO" id="GO:0016477">
    <property type="term" value="P:cell migration"/>
    <property type="evidence" value="ECO:0000250"/>
    <property type="project" value="UniProtKB"/>
</dbReference>
<dbReference type="GO" id="GO:0007169">
    <property type="term" value="P:cell surface receptor protein tyrosine kinase signaling pathway"/>
    <property type="evidence" value="ECO:0000318"/>
    <property type="project" value="GO_Central"/>
</dbReference>
<dbReference type="GO" id="GO:0060996">
    <property type="term" value="P:dendritic spine development"/>
    <property type="evidence" value="ECO:0000250"/>
    <property type="project" value="UniProtKB"/>
</dbReference>
<dbReference type="GO" id="GO:0060997">
    <property type="term" value="P:dendritic spine morphogenesis"/>
    <property type="evidence" value="ECO:0000250"/>
    <property type="project" value="UniProtKB"/>
</dbReference>
<dbReference type="GO" id="GO:0048013">
    <property type="term" value="P:ephrin receptor signaling pathway"/>
    <property type="evidence" value="ECO:0000250"/>
    <property type="project" value="UniProtKB"/>
</dbReference>
<dbReference type="GO" id="GO:0051965">
    <property type="term" value="P:positive regulation of synapse assembly"/>
    <property type="evidence" value="ECO:0000250"/>
    <property type="project" value="UniProtKB"/>
</dbReference>
<dbReference type="GO" id="GO:0046777">
    <property type="term" value="P:protein autophosphorylation"/>
    <property type="evidence" value="ECO:0000250"/>
    <property type="project" value="UniProtKB"/>
</dbReference>
<dbReference type="GO" id="GO:0050770">
    <property type="term" value="P:regulation of axonogenesis"/>
    <property type="evidence" value="ECO:0000250"/>
    <property type="project" value="UniProtKB"/>
</dbReference>
<dbReference type="GO" id="GO:0022407">
    <property type="term" value="P:regulation of cell-cell adhesion"/>
    <property type="evidence" value="ECO:0000250"/>
    <property type="project" value="UniProtKB"/>
</dbReference>
<dbReference type="GO" id="GO:0043087">
    <property type="term" value="P:regulation of GTPase activity"/>
    <property type="evidence" value="ECO:0000250"/>
    <property type="project" value="UniProtKB"/>
</dbReference>
<dbReference type="GO" id="GO:0034446">
    <property type="term" value="P:substrate adhesion-dependent cell spreading"/>
    <property type="evidence" value="ECO:0000250"/>
    <property type="project" value="UniProtKB"/>
</dbReference>
<dbReference type="CDD" id="cd00063">
    <property type="entry name" value="FN3"/>
    <property type="match status" value="1"/>
</dbReference>
<dbReference type="CDD" id="cd05065">
    <property type="entry name" value="PTKc_EphR_B"/>
    <property type="match status" value="1"/>
</dbReference>
<dbReference type="FunFam" id="3.30.200.20:FF:000001">
    <property type="entry name" value="Ephrin type-A receptor 5"/>
    <property type="match status" value="1"/>
</dbReference>
<dbReference type="FunFam" id="1.10.510.10:FF:000015">
    <property type="entry name" value="Ephrin type-B receptor 2"/>
    <property type="match status" value="1"/>
</dbReference>
<dbReference type="Gene3D" id="2.60.40.10">
    <property type="entry name" value="Immunoglobulins"/>
    <property type="match status" value="1"/>
</dbReference>
<dbReference type="Gene3D" id="3.30.200.20">
    <property type="entry name" value="Phosphorylase Kinase, domain 1"/>
    <property type="match status" value="1"/>
</dbReference>
<dbReference type="Gene3D" id="1.10.510.10">
    <property type="entry name" value="Transferase(Phosphotransferase) domain 1"/>
    <property type="match status" value="1"/>
</dbReference>
<dbReference type="InterPro" id="IPR027936">
    <property type="entry name" value="Eph_TM"/>
</dbReference>
<dbReference type="InterPro" id="IPR050449">
    <property type="entry name" value="Ephrin_rcpt_TKs"/>
</dbReference>
<dbReference type="InterPro" id="IPR003961">
    <property type="entry name" value="FN3_dom"/>
</dbReference>
<dbReference type="InterPro" id="IPR036116">
    <property type="entry name" value="FN3_sf"/>
</dbReference>
<dbReference type="InterPro" id="IPR013783">
    <property type="entry name" value="Ig-like_fold"/>
</dbReference>
<dbReference type="InterPro" id="IPR011009">
    <property type="entry name" value="Kinase-like_dom_sf"/>
</dbReference>
<dbReference type="InterPro" id="IPR000719">
    <property type="entry name" value="Prot_kinase_dom"/>
</dbReference>
<dbReference type="InterPro" id="IPR017441">
    <property type="entry name" value="Protein_kinase_ATP_BS"/>
</dbReference>
<dbReference type="InterPro" id="IPR001660">
    <property type="entry name" value="SAM"/>
</dbReference>
<dbReference type="InterPro" id="IPR001245">
    <property type="entry name" value="Ser-Thr/Tyr_kinase_cat_dom"/>
</dbReference>
<dbReference type="InterPro" id="IPR008266">
    <property type="entry name" value="Tyr_kinase_AS"/>
</dbReference>
<dbReference type="InterPro" id="IPR020635">
    <property type="entry name" value="Tyr_kinase_cat_dom"/>
</dbReference>
<dbReference type="PANTHER" id="PTHR46877">
    <property type="entry name" value="EPH RECEPTOR A5"/>
    <property type="match status" value="1"/>
</dbReference>
<dbReference type="PANTHER" id="PTHR46877:SF6">
    <property type="entry name" value="EPHRIN TYPE-B RECEPTOR 3"/>
    <property type="match status" value="1"/>
</dbReference>
<dbReference type="Pfam" id="PF14575">
    <property type="entry name" value="EphA2_TM"/>
    <property type="match status" value="1"/>
</dbReference>
<dbReference type="Pfam" id="PF00041">
    <property type="entry name" value="fn3"/>
    <property type="match status" value="1"/>
</dbReference>
<dbReference type="Pfam" id="PF07714">
    <property type="entry name" value="PK_Tyr_Ser-Thr"/>
    <property type="match status" value="1"/>
</dbReference>
<dbReference type="PRINTS" id="PR00109">
    <property type="entry name" value="TYRKINASE"/>
</dbReference>
<dbReference type="SMART" id="SM00219">
    <property type="entry name" value="TyrKc"/>
    <property type="match status" value="1"/>
</dbReference>
<dbReference type="SUPFAM" id="SSF49265">
    <property type="entry name" value="Fibronectin type III"/>
    <property type="match status" value="1"/>
</dbReference>
<dbReference type="SUPFAM" id="SSF56112">
    <property type="entry name" value="Protein kinase-like (PK-like)"/>
    <property type="match status" value="1"/>
</dbReference>
<dbReference type="PROSITE" id="PS50853">
    <property type="entry name" value="FN3"/>
    <property type="match status" value="1"/>
</dbReference>
<dbReference type="PROSITE" id="PS00107">
    <property type="entry name" value="PROTEIN_KINASE_ATP"/>
    <property type="match status" value="1"/>
</dbReference>
<dbReference type="PROSITE" id="PS50011">
    <property type="entry name" value="PROTEIN_KINASE_DOM"/>
    <property type="match status" value="1"/>
</dbReference>
<dbReference type="PROSITE" id="PS00109">
    <property type="entry name" value="PROTEIN_KINASE_TYR"/>
    <property type="match status" value="1"/>
</dbReference>
<dbReference type="PROSITE" id="PS50105">
    <property type="entry name" value="SAM_DOMAIN"/>
    <property type="match status" value="1"/>
</dbReference>
<proteinExistence type="evidence at transcript level"/>
<evidence type="ECO:0000250" key="1"/>
<evidence type="ECO:0000255" key="2"/>
<evidence type="ECO:0000255" key="3">
    <source>
        <dbReference type="PROSITE-ProRule" id="PRU00159"/>
    </source>
</evidence>
<evidence type="ECO:0000255" key="4">
    <source>
        <dbReference type="PROSITE-ProRule" id="PRU00184"/>
    </source>
</evidence>
<evidence type="ECO:0000255" key="5">
    <source>
        <dbReference type="PROSITE-ProRule" id="PRU00316"/>
    </source>
</evidence>
<evidence type="ECO:0000255" key="6">
    <source>
        <dbReference type="PROSITE-ProRule" id="PRU10028"/>
    </source>
</evidence>
<evidence type="ECO:0000256" key="7">
    <source>
        <dbReference type="SAM" id="MobiDB-lite"/>
    </source>
</evidence>
<gene>
    <name type="primary">ephb3</name>
    <name type="synonym">ek3</name>
    <name type="synonym">zek3</name>
</gene>